<accession>Q4L4A4</accession>
<name>Y2212_STAHJ</name>
<reference key="1">
    <citation type="journal article" date="2005" name="J. Bacteriol.">
        <title>Whole-genome sequencing of Staphylococcus haemolyticus uncovers the extreme plasticity of its genome and the evolution of human-colonizing staphylococcal species.</title>
        <authorList>
            <person name="Takeuchi F."/>
            <person name="Watanabe S."/>
            <person name="Baba T."/>
            <person name="Yuzawa H."/>
            <person name="Ito T."/>
            <person name="Morimoto Y."/>
            <person name="Kuroda M."/>
            <person name="Cui L."/>
            <person name="Takahashi M."/>
            <person name="Ankai A."/>
            <person name="Baba S."/>
            <person name="Fukui S."/>
            <person name="Lee J.C."/>
            <person name="Hiramatsu K."/>
        </authorList>
    </citation>
    <scope>NUCLEOTIDE SEQUENCE [LARGE SCALE GENOMIC DNA]</scope>
    <source>
        <strain>JCSC1435</strain>
    </source>
</reference>
<feature type="chain" id="PRO_0000176016" description="UPF0178 protein SH2212">
    <location>
        <begin position="1"/>
        <end position="148"/>
    </location>
</feature>
<sequence length="148" mass="16721">MTRVIIDGDACPVVDSVIELTTGTGIFVTILRSFSHYSNKVLPNHVETIYIDDGPDAVDYKIVKLATPEDIVITQDYGLASLLLSKVKIVMHHKGHLYRSSNIDMLLQQRYNNAQIRKQGGRHKGPPPFSKEDKKQFERAFKSVIKQL</sequence>
<comment type="similarity">
    <text evidence="1">Belongs to the UPF0178 family.</text>
</comment>
<organism>
    <name type="scientific">Staphylococcus haemolyticus (strain JCSC1435)</name>
    <dbReference type="NCBI Taxonomy" id="279808"/>
    <lineage>
        <taxon>Bacteria</taxon>
        <taxon>Bacillati</taxon>
        <taxon>Bacillota</taxon>
        <taxon>Bacilli</taxon>
        <taxon>Bacillales</taxon>
        <taxon>Staphylococcaceae</taxon>
        <taxon>Staphylococcus</taxon>
    </lineage>
</organism>
<gene>
    <name type="ordered locus">SH2212</name>
</gene>
<evidence type="ECO:0000255" key="1">
    <source>
        <dbReference type="HAMAP-Rule" id="MF_00489"/>
    </source>
</evidence>
<dbReference type="EMBL" id="AP006716">
    <property type="protein sequence ID" value="BAE05521.1"/>
    <property type="molecule type" value="Genomic_DNA"/>
</dbReference>
<dbReference type="RefSeq" id="WP_011276472.1">
    <property type="nucleotide sequence ID" value="NC_007168.1"/>
</dbReference>
<dbReference type="SMR" id="Q4L4A4"/>
<dbReference type="KEGG" id="sha:SH2212"/>
<dbReference type="eggNOG" id="COG1671">
    <property type="taxonomic scope" value="Bacteria"/>
</dbReference>
<dbReference type="HOGENOM" id="CLU_106619_0_0_9"/>
<dbReference type="OrthoDB" id="9798918at2"/>
<dbReference type="Proteomes" id="UP000000543">
    <property type="component" value="Chromosome"/>
</dbReference>
<dbReference type="HAMAP" id="MF_00489">
    <property type="entry name" value="UPF0178"/>
    <property type="match status" value="1"/>
</dbReference>
<dbReference type="InterPro" id="IPR003791">
    <property type="entry name" value="UPF0178"/>
</dbReference>
<dbReference type="NCBIfam" id="NF001095">
    <property type="entry name" value="PRK00124.1"/>
    <property type="match status" value="1"/>
</dbReference>
<dbReference type="PANTHER" id="PTHR35146">
    <property type="entry name" value="UPF0178 PROTEIN YAII"/>
    <property type="match status" value="1"/>
</dbReference>
<dbReference type="PANTHER" id="PTHR35146:SF1">
    <property type="entry name" value="UPF0178 PROTEIN YAII"/>
    <property type="match status" value="1"/>
</dbReference>
<dbReference type="Pfam" id="PF02639">
    <property type="entry name" value="DUF188"/>
    <property type="match status" value="1"/>
</dbReference>
<proteinExistence type="inferred from homology"/>
<protein>
    <recommendedName>
        <fullName evidence="1">UPF0178 protein SH2212</fullName>
    </recommendedName>
</protein>